<accession>Q6H795</accession>
<accession>A0A0P0VJZ7</accession>
<reference key="1">
    <citation type="journal article" date="2005" name="Nature">
        <title>The map-based sequence of the rice genome.</title>
        <authorList>
            <consortium name="International rice genome sequencing project (IRGSP)"/>
        </authorList>
    </citation>
    <scope>NUCLEOTIDE SEQUENCE [LARGE SCALE GENOMIC DNA]</scope>
    <source>
        <strain>cv. Nipponbare</strain>
    </source>
</reference>
<reference key="2">
    <citation type="journal article" date="2008" name="Nucleic Acids Res.">
        <title>The rice annotation project database (RAP-DB): 2008 update.</title>
        <authorList>
            <consortium name="The rice annotation project (RAP)"/>
        </authorList>
    </citation>
    <scope>GENOME REANNOTATION</scope>
    <source>
        <strain>cv. Nipponbare</strain>
    </source>
</reference>
<reference key="3">
    <citation type="journal article" date="2013" name="Rice">
        <title>Improvement of the Oryza sativa Nipponbare reference genome using next generation sequence and optical map data.</title>
        <authorList>
            <person name="Kawahara Y."/>
            <person name="de la Bastide M."/>
            <person name="Hamilton J.P."/>
            <person name="Kanamori H."/>
            <person name="McCombie W.R."/>
            <person name="Ouyang S."/>
            <person name="Schwartz D.C."/>
            <person name="Tanaka T."/>
            <person name="Wu J."/>
            <person name="Zhou S."/>
            <person name="Childs K.L."/>
            <person name="Davidson R.M."/>
            <person name="Lin H."/>
            <person name="Quesada-Ocampo L."/>
            <person name="Vaillancourt B."/>
            <person name="Sakai H."/>
            <person name="Lee S.S."/>
            <person name="Kim J."/>
            <person name="Numa H."/>
            <person name="Itoh T."/>
            <person name="Buell C.R."/>
            <person name="Matsumoto T."/>
        </authorList>
    </citation>
    <scope>GENOME REANNOTATION</scope>
    <source>
        <strain>cv. Nipponbare</strain>
    </source>
</reference>
<reference key="4">
    <citation type="journal article" date="2006" name="Proc. Natl. Acad. Sci. U.S.A.">
        <title>Overexpressing a NAM, ATAF, and CUC (NAC) transcription factor enhances drought resistance and salt tolerance in rice.</title>
        <authorList>
            <person name="Hu H."/>
            <person name="Dai M."/>
            <person name="Yao J."/>
            <person name="Xiao B."/>
            <person name="Li X."/>
            <person name="Zhang Q."/>
            <person name="Xiong L."/>
        </authorList>
    </citation>
    <scope>INDUCTION</scope>
</reference>
<reference key="5">
    <citation type="journal article" date="2010" name="BMC Genomics">
        <title>Genome-wide analysis of rice ClpB/HSP100, ClpC and ClpD genes.</title>
        <authorList>
            <person name="Singh A."/>
            <person name="Singh U."/>
            <person name="Mittal D."/>
            <person name="Grover A."/>
        </authorList>
    </citation>
    <scope>FUNCTION</scope>
    <scope>TISSUE SPECIFICITY</scope>
    <scope>INDUCTION BY LOW TEMPERATURE</scope>
</reference>
<reference key="6">
    <citation type="journal article" date="2016" name="Plant Sci.">
        <title>Constitutive over-expression of rice ClpD1 protein enhances tolerance to salt and desiccation stresses in transgenic Arabidopsis plants.</title>
        <authorList>
            <person name="Mishra R.C."/>
            <person name="Richa X."/>
            <person name="Grover A."/>
        </authorList>
    </citation>
    <scope>FUNCTION</scope>
</reference>
<proteinExistence type="evidence at transcript level"/>
<comment type="function">
    <text evidence="6 7">Molecular chaperone that may function in heat stress response. May interact with a ClpP-like protease involved in degradation of denatured proteins in the chloroplast (PubMed:20141629). Chaperone involved in response to abiotic stresses. Plays a positive role during dehydration and salt stress (PubMed:27457985).</text>
</comment>
<comment type="subcellular location">
    <subcellularLocation>
        <location evidence="10">Plastid</location>
        <location evidence="10">Chloroplast</location>
    </subcellularLocation>
</comment>
<comment type="tissue specificity">
    <text evidence="6">Expressed in stems, culms and leaves.</text>
</comment>
<comment type="induction">
    <text evidence="5 6">Induced by low temperature (PubMed:20141629). Induced by drought stress, salt stress and abscisic acid (PubMed:16924117).</text>
</comment>
<comment type="miscellaneous">
    <text evidence="7">Plants overexpressing CLPD1 exhibit improved tolerance to drought and salt stresses.</text>
</comment>
<comment type="similarity">
    <text evidence="10">Belongs to the ClpA/ClpB family. ClpD subfamily.</text>
</comment>
<comment type="sequence caution" evidence="10">
    <conflict type="erroneous gene model prediction">
        <sequence resource="EMBL-CDS" id="BAS78991"/>
    </conflict>
</comment>
<feature type="transit peptide" description="Chloroplast" evidence="2">
    <location>
        <begin position="1"/>
        <end position="83"/>
    </location>
</feature>
<feature type="chain" id="PRO_0000412583" description="Chaperone protein ClpD1, chloroplastic">
    <location>
        <begin position="84"/>
        <end position="938"/>
    </location>
</feature>
<feature type="domain" description="Clp R" evidence="3">
    <location>
        <begin position="84"/>
        <end position="224"/>
    </location>
</feature>
<feature type="region of interest" description="Repeat 1" evidence="3">
    <location>
        <begin position="84"/>
        <end position="145"/>
    </location>
</feature>
<feature type="region of interest" description="Repeat 2" evidence="3">
    <location>
        <begin position="159"/>
        <end position="224"/>
    </location>
</feature>
<feature type="region of interest" description="Disordered" evidence="4">
    <location>
        <begin position="234"/>
        <end position="255"/>
    </location>
</feature>
<feature type="region of interest" description="I" evidence="1">
    <location>
        <begin position="266"/>
        <end position="519"/>
    </location>
</feature>
<feature type="region of interest" description="II" evidence="1">
    <location>
        <begin position="586"/>
        <end position="777"/>
    </location>
</feature>
<feature type="binding site" evidence="2">
    <location>
        <begin position="311"/>
        <end position="318"/>
    </location>
    <ligand>
        <name>ATP</name>
        <dbReference type="ChEBI" id="CHEBI:30616"/>
    </ligand>
</feature>
<feature type="binding site" evidence="2">
    <location>
        <begin position="660"/>
        <end position="667"/>
    </location>
    <ligand>
        <name>ATP</name>
        <dbReference type="ChEBI" id="CHEBI:30616"/>
    </ligand>
</feature>
<keyword id="KW-0067">ATP-binding</keyword>
<keyword id="KW-0143">Chaperone</keyword>
<keyword id="KW-0150">Chloroplast</keyword>
<keyword id="KW-0547">Nucleotide-binding</keyword>
<keyword id="KW-0934">Plastid</keyword>
<keyword id="KW-1185">Reference proteome</keyword>
<keyword id="KW-0677">Repeat</keyword>
<keyword id="KW-0346">Stress response</keyword>
<keyword id="KW-0809">Transit peptide</keyword>
<protein>
    <recommendedName>
        <fullName evidence="10">Chaperone protein ClpD1, chloroplastic</fullName>
    </recommendedName>
    <alternativeName>
        <fullName evidence="10">ATP-dependent Clp protease ATP-binding subunit ClpD homolog 1</fullName>
    </alternativeName>
    <alternativeName>
        <fullName evidence="9">Casein lytic proteinase D1</fullName>
    </alternativeName>
</protein>
<gene>
    <name evidence="8" type="primary">CLPD1</name>
    <name evidence="12" type="ordered locus">Os02g0526400</name>
    <name evidence="10" type="ordered locus">LOC_Os02g32520</name>
    <name evidence="11" type="ORF">P0458B05.10</name>
</gene>
<name>CLPD1_ORYSJ</name>
<dbReference type="EMBL" id="AP004777">
    <property type="protein sequence ID" value="BAD25404.1"/>
    <property type="molecule type" value="Genomic_DNA"/>
</dbReference>
<dbReference type="EMBL" id="AP008208">
    <property type="protein sequence ID" value="BAF08911.1"/>
    <property type="molecule type" value="Genomic_DNA"/>
</dbReference>
<dbReference type="EMBL" id="AP014958">
    <property type="protein sequence ID" value="BAS78991.1"/>
    <property type="status" value="ALT_SEQ"/>
    <property type="molecule type" value="Genomic_DNA"/>
</dbReference>
<dbReference type="RefSeq" id="XP_015625492.1">
    <property type="nucleotide sequence ID" value="XM_015770006.1"/>
</dbReference>
<dbReference type="SMR" id="Q6H795"/>
<dbReference type="FunCoup" id="Q6H795">
    <property type="interactions" value="312"/>
</dbReference>
<dbReference type="STRING" id="39947.Q6H795"/>
<dbReference type="PaxDb" id="39947-Q6H795"/>
<dbReference type="KEGG" id="dosa:Os02g0526400"/>
<dbReference type="eggNOG" id="KOG1051">
    <property type="taxonomic scope" value="Eukaryota"/>
</dbReference>
<dbReference type="HOGENOM" id="CLU_005070_4_1_1"/>
<dbReference type="InParanoid" id="Q6H795"/>
<dbReference type="OrthoDB" id="47330at2759"/>
<dbReference type="Proteomes" id="UP000000763">
    <property type="component" value="Chromosome 2"/>
</dbReference>
<dbReference type="Proteomes" id="UP000059680">
    <property type="component" value="Chromosome 2"/>
</dbReference>
<dbReference type="GO" id="GO:0009507">
    <property type="term" value="C:chloroplast"/>
    <property type="evidence" value="ECO:0007669"/>
    <property type="project" value="UniProtKB-SubCell"/>
</dbReference>
<dbReference type="GO" id="GO:0005524">
    <property type="term" value="F:ATP binding"/>
    <property type="evidence" value="ECO:0007669"/>
    <property type="project" value="UniProtKB-KW"/>
</dbReference>
<dbReference type="GO" id="GO:0016887">
    <property type="term" value="F:ATP hydrolysis activity"/>
    <property type="evidence" value="ECO:0007669"/>
    <property type="project" value="InterPro"/>
</dbReference>
<dbReference type="GO" id="GO:0034605">
    <property type="term" value="P:cellular response to heat"/>
    <property type="evidence" value="ECO:0000315"/>
    <property type="project" value="UniProtKB"/>
</dbReference>
<dbReference type="GO" id="GO:1901002">
    <property type="term" value="P:positive regulation of response to salt stress"/>
    <property type="evidence" value="ECO:0000315"/>
    <property type="project" value="UniProtKB"/>
</dbReference>
<dbReference type="GO" id="GO:1902584">
    <property type="term" value="P:positive regulation of response to water deprivation"/>
    <property type="evidence" value="ECO:0000315"/>
    <property type="project" value="UniProtKB"/>
</dbReference>
<dbReference type="CDD" id="cd00009">
    <property type="entry name" value="AAA"/>
    <property type="match status" value="1"/>
</dbReference>
<dbReference type="CDD" id="cd19499">
    <property type="entry name" value="RecA-like_ClpB_Hsp104-like"/>
    <property type="match status" value="1"/>
</dbReference>
<dbReference type="FunFam" id="1.10.1780.10:FF:000004">
    <property type="entry name" value="ATP-dependent Clp protease ATP-binding subunit ClpC"/>
    <property type="match status" value="1"/>
</dbReference>
<dbReference type="FunFam" id="3.40.50.300:FF:000025">
    <property type="entry name" value="ATP-dependent Clp protease subunit"/>
    <property type="match status" value="1"/>
</dbReference>
<dbReference type="FunFam" id="3.40.50.300:FF:000010">
    <property type="entry name" value="Chaperone clpB 1, putative"/>
    <property type="match status" value="1"/>
</dbReference>
<dbReference type="Gene3D" id="1.10.8.60">
    <property type="match status" value="2"/>
</dbReference>
<dbReference type="Gene3D" id="1.10.1780.10">
    <property type="entry name" value="Clp, N-terminal domain"/>
    <property type="match status" value="1"/>
</dbReference>
<dbReference type="Gene3D" id="3.40.50.300">
    <property type="entry name" value="P-loop containing nucleotide triphosphate hydrolases"/>
    <property type="match status" value="2"/>
</dbReference>
<dbReference type="Gene3D" id="4.10.860.10">
    <property type="entry name" value="UVR domain"/>
    <property type="match status" value="1"/>
</dbReference>
<dbReference type="InterPro" id="IPR003593">
    <property type="entry name" value="AAA+_ATPase"/>
</dbReference>
<dbReference type="InterPro" id="IPR003959">
    <property type="entry name" value="ATPase_AAA_core"/>
</dbReference>
<dbReference type="InterPro" id="IPR019489">
    <property type="entry name" value="Clp_ATPase_C"/>
</dbReference>
<dbReference type="InterPro" id="IPR036628">
    <property type="entry name" value="Clp_N_dom_sf"/>
</dbReference>
<dbReference type="InterPro" id="IPR004176">
    <property type="entry name" value="Clp_R_dom"/>
</dbReference>
<dbReference type="InterPro" id="IPR001270">
    <property type="entry name" value="ClpA/B"/>
</dbReference>
<dbReference type="InterPro" id="IPR018368">
    <property type="entry name" value="ClpA/B_CS1"/>
</dbReference>
<dbReference type="InterPro" id="IPR028299">
    <property type="entry name" value="ClpA/B_CS2"/>
</dbReference>
<dbReference type="InterPro" id="IPR041546">
    <property type="entry name" value="ClpA/ClpB_AAA_lid"/>
</dbReference>
<dbReference type="InterPro" id="IPR050130">
    <property type="entry name" value="ClpA_ClpB"/>
</dbReference>
<dbReference type="InterPro" id="IPR027417">
    <property type="entry name" value="P-loop_NTPase"/>
</dbReference>
<dbReference type="PANTHER" id="PTHR11638">
    <property type="entry name" value="ATP-DEPENDENT CLP PROTEASE"/>
    <property type="match status" value="1"/>
</dbReference>
<dbReference type="PANTHER" id="PTHR11638:SF185">
    <property type="entry name" value="ATP-DEPENDENT CLP PROTEASE ATP-BINDING SUBUNIT"/>
    <property type="match status" value="1"/>
</dbReference>
<dbReference type="Pfam" id="PF00004">
    <property type="entry name" value="AAA"/>
    <property type="match status" value="1"/>
</dbReference>
<dbReference type="Pfam" id="PF07724">
    <property type="entry name" value="AAA_2"/>
    <property type="match status" value="1"/>
</dbReference>
<dbReference type="Pfam" id="PF17871">
    <property type="entry name" value="AAA_lid_9"/>
    <property type="match status" value="1"/>
</dbReference>
<dbReference type="Pfam" id="PF02861">
    <property type="entry name" value="Clp_N"/>
    <property type="match status" value="2"/>
</dbReference>
<dbReference type="Pfam" id="PF10431">
    <property type="entry name" value="ClpB_D2-small"/>
    <property type="match status" value="1"/>
</dbReference>
<dbReference type="PRINTS" id="PR00300">
    <property type="entry name" value="CLPPROTEASEA"/>
</dbReference>
<dbReference type="SMART" id="SM00382">
    <property type="entry name" value="AAA"/>
    <property type="match status" value="2"/>
</dbReference>
<dbReference type="SMART" id="SM01086">
    <property type="entry name" value="ClpB_D2-small"/>
    <property type="match status" value="1"/>
</dbReference>
<dbReference type="SUPFAM" id="SSF81923">
    <property type="entry name" value="Double Clp-N motif"/>
    <property type="match status" value="1"/>
</dbReference>
<dbReference type="SUPFAM" id="SSF52540">
    <property type="entry name" value="P-loop containing nucleoside triphosphate hydrolases"/>
    <property type="match status" value="2"/>
</dbReference>
<dbReference type="PROSITE" id="PS51903">
    <property type="entry name" value="CLP_R"/>
    <property type="match status" value="1"/>
</dbReference>
<dbReference type="PROSITE" id="PS00870">
    <property type="entry name" value="CLPAB_1"/>
    <property type="match status" value="1"/>
</dbReference>
<dbReference type="PROSITE" id="PS00871">
    <property type="entry name" value="CLPAB_2"/>
    <property type="match status" value="1"/>
</dbReference>
<evidence type="ECO:0000250" key="1"/>
<evidence type="ECO:0000255" key="2"/>
<evidence type="ECO:0000255" key="3">
    <source>
        <dbReference type="PROSITE-ProRule" id="PRU01251"/>
    </source>
</evidence>
<evidence type="ECO:0000256" key="4">
    <source>
        <dbReference type="SAM" id="MobiDB-lite"/>
    </source>
</evidence>
<evidence type="ECO:0000269" key="5">
    <source>
    </source>
</evidence>
<evidence type="ECO:0000269" key="6">
    <source>
    </source>
</evidence>
<evidence type="ECO:0000269" key="7">
    <source>
    </source>
</evidence>
<evidence type="ECO:0000303" key="8">
    <source>
    </source>
</evidence>
<evidence type="ECO:0000303" key="9">
    <source>
    </source>
</evidence>
<evidence type="ECO:0000305" key="10"/>
<evidence type="ECO:0000312" key="11">
    <source>
        <dbReference type="EMBL" id="BAD25404.1"/>
    </source>
</evidence>
<evidence type="ECO:0000312" key="12">
    <source>
        <dbReference type="EMBL" id="BAF08911.1"/>
    </source>
</evidence>
<sequence length="938" mass="101884">MEVCCCSTSSAVPGRRFAAAGAAAAAVAARWGAVGVGRAVVLAHPLRPAPRGGHAHAQQAGARRARRAVVRAVFERFTERAVKAVVLSQREAKGLGEGAVAPRHLLLGLIAEDRSAGGFLSSGINIERAREECRGIGARDLTPGAPSPSGSGLEMDIPFSGSCKRVFEVAVEFSRNMGCSFISPEHLALALFTLDDPTTNSLLRSLGADPSQLASVALTRLQAELAKDCREPAGASSFKVPKKSPAGAGRSAFSKSLNSKKEKGALDQFCLDLTTQASGGFIDPIIGREEEIERVVQIICRRTKNNPILLGEAGVGKTAIAEGLALRIANGDVPIYLVAKRIMSLDVGLLIAGAKERGELESRVTSLIREVREAGDVILFIDEVHNLIGSGTVGKGKGAGLDIGNLLKPPLARGELQCIAATTLDEHRMHFEKDKALARRFQPVLVEEPSQDDAVKILLGLREKYETYHKCKFTLEAINAAVYLSARYIPDRQLPDKAIDLIDEAGSRARMESFNRKKEGQSSILLKSPDEYWQEIRAAQNMHEVVSSNQMKYSPRQENGSAAIKAPSEDMNELTSELQVEEPIVVGTEEIARVASLWSGIPVQQLTADDRKLLVGLDGELRKRVIGQDDAVMAISRAVKRSRVGLNDPDRPIATLLFCGPTGVGKTELTKALAASYFGSESAMLRLDMSEYMERHTVSKLIGSPPGYIGYGETGTLTEAVRRKPFTVVLLDEIEKAHPDIFNILLQIFEDGHLSDSQGRRVSFKNTLIVMTSNIGSTSISKGRRSMGFMTEDTESSSYVAMKSLVMEELKAFFRPELLNRIDEMVVFRPLEKTQMLAILDIILQEVKGRLLALGIGLEVSDAMKDLICEEGYDKSYGARPLRRAVTHLIEDVISEAILFGEYKPGDTILMDIDAGGKLCMSHLNEKVVQLSDPTRTF</sequence>
<organism>
    <name type="scientific">Oryza sativa subsp. japonica</name>
    <name type="common">Rice</name>
    <dbReference type="NCBI Taxonomy" id="39947"/>
    <lineage>
        <taxon>Eukaryota</taxon>
        <taxon>Viridiplantae</taxon>
        <taxon>Streptophyta</taxon>
        <taxon>Embryophyta</taxon>
        <taxon>Tracheophyta</taxon>
        <taxon>Spermatophyta</taxon>
        <taxon>Magnoliopsida</taxon>
        <taxon>Liliopsida</taxon>
        <taxon>Poales</taxon>
        <taxon>Poaceae</taxon>
        <taxon>BOP clade</taxon>
        <taxon>Oryzoideae</taxon>
        <taxon>Oryzeae</taxon>
        <taxon>Oryzinae</taxon>
        <taxon>Oryza</taxon>
        <taxon>Oryza sativa</taxon>
    </lineage>
</organism>